<comment type="function">
    <text evidence="1">May be important in developing and maintaining corneal transparency and for the structure of the stromal matrix.</text>
</comment>
<comment type="subcellular location">
    <subcellularLocation>
        <location>Secreted</location>
        <location>Extracellular space</location>
        <location>Extracellular matrix</location>
    </subcellularLocation>
</comment>
<comment type="tissue specificity">
    <text evidence="4">Abundant in cornea and sclera but also found in other tissues.</text>
</comment>
<comment type="PTM">
    <text>Binds three long, highly sulfated keratan sulfate chains in the cornea but short, non-sulfated poly(N-acetyllactosamine) chains in other tissues.</text>
</comment>
<comment type="PTM">
    <text>The N-terminus is blocked.</text>
</comment>
<comment type="similarity">
    <text evidence="5">Belongs to the small leucine-rich proteoglycan (SLRP) family. SLRP class II subfamily.</text>
</comment>
<protein>
    <recommendedName>
        <fullName>Keratocan</fullName>
        <shortName>KTN</shortName>
    </recommendedName>
    <alternativeName>
        <fullName>Corneal keratan sulfate proteoglycan 37A core protein</fullName>
    </alternativeName>
    <alternativeName>
        <fullName>Keratan sulfate proteoglycan keratocan</fullName>
        <shortName>KSPG keratocan</shortName>
    </alternativeName>
</protein>
<name>KERA_BOVIN</name>
<dbReference type="EMBL" id="U48360">
    <property type="protein sequence ID" value="AAC48568.1"/>
    <property type="molecule type" value="mRNA"/>
</dbReference>
<dbReference type="EMBL" id="AF036962">
    <property type="protein sequence ID" value="AAC69272.1"/>
    <property type="molecule type" value="Genomic_DNA"/>
</dbReference>
<dbReference type="EMBL" id="BC120375">
    <property type="protein sequence ID" value="AAI20376.1"/>
    <property type="molecule type" value="mRNA"/>
</dbReference>
<dbReference type="RefSeq" id="NP_776335.1">
    <property type="nucleotide sequence ID" value="NM_173910.1"/>
</dbReference>
<dbReference type="RefSeq" id="XP_010803060.1">
    <property type="nucleotide sequence ID" value="XM_010804758.2"/>
</dbReference>
<dbReference type="RefSeq" id="XP_015326371.1">
    <property type="nucleotide sequence ID" value="XM_015470885.1"/>
</dbReference>
<dbReference type="SMR" id="O62702"/>
<dbReference type="FunCoup" id="O62702">
    <property type="interactions" value="12"/>
</dbReference>
<dbReference type="STRING" id="9913.ENSBTAP00000019066"/>
<dbReference type="GlyCosmos" id="O62702">
    <property type="glycosylation" value="5 sites, No reported glycans"/>
</dbReference>
<dbReference type="GlyGen" id="O62702">
    <property type="glycosylation" value="5 sites"/>
</dbReference>
<dbReference type="PaxDb" id="9913-ENSBTAP00000019066"/>
<dbReference type="GeneID" id="280785"/>
<dbReference type="KEGG" id="bta:280785"/>
<dbReference type="CTD" id="11081"/>
<dbReference type="eggNOG" id="KOG0619">
    <property type="taxonomic scope" value="Eukaryota"/>
</dbReference>
<dbReference type="HOGENOM" id="CLU_000288_186_4_1"/>
<dbReference type="InParanoid" id="O62702"/>
<dbReference type="OrthoDB" id="5789657at2759"/>
<dbReference type="TreeFam" id="TF334562"/>
<dbReference type="Proteomes" id="UP000009136">
    <property type="component" value="Unplaced"/>
</dbReference>
<dbReference type="GO" id="GO:0005615">
    <property type="term" value="C:extracellular space"/>
    <property type="evidence" value="ECO:0000318"/>
    <property type="project" value="GO_Central"/>
</dbReference>
<dbReference type="FunFam" id="3.80.10.10:FF:000092">
    <property type="entry name" value="keratocan isoform X1"/>
    <property type="match status" value="1"/>
</dbReference>
<dbReference type="FunFam" id="3.80.10.10:FF:000133">
    <property type="entry name" value="prolargin"/>
    <property type="match status" value="1"/>
</dbReference>
<dbReference type="Gene3D" id="3.80.10.10">
    <property type="entry name" value="Ribonuclease Inhibitor"/>
    <property type="match status" value="2"/>
</dbReference>
<dbReference type="InterPro" id="IPR001611">
    <property type="entry name" value="Leu-rich_rpt"/>
</dbReference>
<dbReference type="InterPro" id="IPR003591">
    <property type="entry name" value="Leu-rich_rpt_typical-subtyp"/>
</dbReference>
<dbReference type="InterPro" id="IPR032675">
    <property type="entry name" value="LRR_dom_sf"/>
</dbReference>
<dbReference type="InterPro" id="IPR000372">
    <property type="entry name" value="LRRNT"/>
</dbReference>
<dbReference type="InterPro" id="IPR050333">
    <property type="entry name" value="SLRP"/>
</dbReference>
<dbReference type="PANTHER" id="PTHR45712">
    <property type="entry name" value="AGAP008170-PA"/>
    <property type="match status" value="1"/>
</dbReference>
<dbReference type="PANTHER" id="PTHR45712:SF13">
    <property type="entry name" value="KERATOCAN"/>
    <property type="match status" value="1"/>
</dbReference>
<dbReference type="Pfam" id="PF13516">
    <property type="entry name" value="LRR_6"/>
    <property type="match status" value="1"/>
</dbReference>
<dbReference type="Pfam" id="PF13855">
    <property type="entry name" value="LRR_8"/>
    <property type="match status" value="2"/>
</dbReference>
<dbReference type="Pfam" id="PF01462">
    <property type="entry name" value="LRRNT"/>
    <property type="match status" value="1"/>
</dbReference>
<dbReference type="SMART" id="SM00369">
    <property type="entry name" value="LRR_TYP"/>
    <property type="match status" value="6"/>
</dbReference>
<dbReference type="SMART" id="SM00013">
    <property type="entry name" value="LRRNT"/>
    <property type="match status" value="1"/>
</dbReference>
<dbReference type="SUPFAM" id="SSF52058">
    <property type="entry name" value="L domain-like"/>
    <property type="match status" value="1"/>
</dbReference>
<dbReference type="PROSITE" id="PS51450">
    <property type="entry name" value="LRR"/>
    <property type="match status" value="9"/>
</dbReference>
<proteinExistence type="evidence at protein level"/>
<keyword id="KW-0903">Direct protein sequencing</keyword>
<keyword id="KW-1015">Disulfide bond</keyword>
<keyword id="KW-0272">Extracellular matrix</keyword>
<keyword id="KW-0325">Glycoprotein</keyword>
<keyword id="KW-0433">Leucine-rich repeat</keyword>
<keyword id="KW-0654">Proteoglycan</keyword>
<keyword id="KW-1185">Reference proteome</keyword>
<keyword id="KW-0677">Repeat</keyword>
<keyword id="KW-0964">Secreted</keyword>
<keyword id="KW-0732">Signal</keyword>
<reference key="1">
    <citation type="journal article" date="1996" name="J. Biol. Chem.">
        <title>Molecular cloning and tissue distribution of keratocan. Bovine corneal keratan sulfate proteoglycan 37A.</title>
        <authorList>
            <person name="Corpuz L.M."/>
            <person name="Funderburgh J.L."/>
            <person name="Funderburgh M.L."/>
            <person name="Bottomley G.S."/>
            <person name="Prakash S."/>
            <person name="Conrad G.W."/>
        </authorList>
    </citation>
    <scope>NUCLEOTIDE SEQUENCE [MRNA]</scope>
    <source>
        <tissue>Cornea</tissue>
    </source>
</reference>
<reference key="2">
    <citation type="journal article" date="1998" name="Gene">
        <title>Cloning, characterization and tissue-specific expression of the gene encoding bovine keratocan, a corneal keratan sulfate proteoglycan.</title>
        <authorList>
            <person name="Tasheva E.S."/>
            <person name="Funderburgh J.L."/>
            <person name="Corpuz L.M."/>
            <person name="Conrad G.W."/>
        </authorList>
    </citation>
    <scope>NUCLEOTIDE SEQUENCE [GENOMIC DNA]</scope>
    <scope>TISSUE SPECIFICITY</scope>
    <source>
        <tissue>Cornea</tissue>
    </source>
</reference>
<reference key="3">
    <citation type="submission" date="2006-08" db="EMBL/GenBank/DDBJ databases">
        <authorList>
            <consortium name="NIH - Mammalian Gene Collection (MGC) project"/>
        </authorList>
    </citation>
    <scope>NUCLEOTIDE SEQUENCE [LARGE SCALE MRNA]</scope>
    <source>
        <strain>Hereford</strain>
        <tissue>Fetal skin</tissue>
    </source>
</reference>
<reference key="4">
    <citation type="journal article" date="1991" name="J. Biol. Chem.">
        <title>Unique glycosylation of three keratan sulfate proteoglycan isoforms.</title>
        <authorList>
            <person name="Funderburgh J.L."/>
            <person name="Funderburgh M.L."/>
            <person name="Mann M.M."/>
            <person name="Conrad G.W."/>
        </authorList>
    </citation>
    <scope>PARTIAL PROTEIN SEQUENCE</scope>
    <scope>GLYCOSYLATION</scope>
    <source>
        <tissue>Cornea</tissue>
    </source>
</reference>
<organism>
    <name type="scientific">Bos taurus</name>
    <name type="common">Bovine</name>
    <dbReference type="NCBI Taxonomy" id="9913"/>
    <lineage>
        <taxon>Eukaryota</taxon>
        <taxon>Metazoa</taxon>
        <taxon>Chordata</taxon>
        <taxon>Craniata</taxon>
        <taxon>Vertebrata</taxon>
        <taxon>Euteleostomi</taxon>
        <taxon>Mammalia</taxon>
        <taxon>Eutheria</taxon>
        <taxon>Laurasiatheria</taxon>
        <taxon>Artiodactyla</taxon>
        <taxon>Ruminantia</taxon>
        <taxon>Pecora</taxon>
        <taxon>Bovidae</taxon>
        <taxon>Bovinae</taxon>
        <taxon>Bos</taxon>
    </lineage>
</organism>
<sequence>MASTICFILWVVFVTDTVWTRSVRQVYEASDPEDWTMHDFDCPRECFCPPSFPTALYCENRGLKEIPAIPSRIWYLYLENNLIETIPEKPFENATQLRWINLNKNKITNYGIEKGALSQLKKLLFLFLEDNELEEVPSPLPRSLEQLQLARNKVSRIPQGTFSNLENLTLLDLQHNKLLDNAFQRDTFKGLKNLMQLNMAKNALRNMPPRLPANTMQVFLDNNSIEGIPENYFNVIPKVAFLRLNHNKLSDAGLPSSGFNVSSILDLQLSHNQLTKVPKISAHLQHLHLDHNKIRNVNVSVICPSTPTTLPVEDSFSYGPHLRYLRLDGNEIKPPIPMDLMTCFRLLQAVII</sequence>
<accession>O62702</accession>
<accession>Q0VC34</accession>
<accession>Q28032</accession>
<evidence type="ECO:0000250" key="1"/>
<evidence type="ECO:0000250" key="2">
    <source>
        <dbReference type="UniProtKB" id="P21793"/>
    </source>
</evidence>
<evidence type="ECO:0000255" key="3"/>
<evidence type="ECO:0000269" key="4">
    <source>
    </source>
</evidence>
<evidence type="ECO:0000305" key="5"/>
<feature type="signal peptide" evidence="3">
    <location>
        <begin position="1"/>
        <end position="20"/>
    </location>
</feature>
<feature type="chain" id="PRO_0000032747" description="Keratocan">
    <location>
        <begin position="21"/>
        <end position="352"/>
    </location>
</feature>
<feature type="domain" description="LRRNT">
    <location>
        <begin position="33"/>
        <end position="71"/>
    </location>
</feature>
<feature type="repeat" description="LRR 1">
    <location>
        <begin position="72"/>
        <end position="93"/>
    </location>
</feature>
<feature type="repeat" description="LRR 2">
    <location>
        <begin position="96"/>
        <end position="117"/>
    </location>
</feature>
<feature type="repeat" description="LRR 3">
    <location>
        <begin position="122"/>
        <end position="142"/>
    </location>
</feature>
<feature type="repeat" description="LRR 4">
    <location>
        <begin position="143"/>
        <end position="164"/>
    </location>
</feature>
<feature type="repeat" description="LRR 5">
    <location>
        <begin position="167"/>
        <end position="180"/>
    </location>
</feature>
<feature type="repeat" description="LRR 6">
    <location>
        <begin position="193"/>
        <end position="214"/>
    </location>
</feature>
<feature type="repeat" description="LRR 7">
    <location>
        <begin position="215"/>
        <end position="235"/>
    </location>
</feature>
<feature type="repeat" description="LRR 8">
    <location>
        <begin position="238"/>
        <end position="258"/>
    </location>
</feature>
<feature type="repeat" description="LRR 9">
    <location>
        <begin position="263"/>
        <end position="282"/>
    </location>
</feature>
<feature type="repeat" description="LRR 10">
    <location>
        <begin position="283"/>
        <end position="304"/>
    </location>
</feature>
<feature type="glycosylation site" description="N-linked (GlcNAc...) (keratan sulfate) asparagine" evidence="1">
    <location>
        <position position="93"/>
    </location>
</feature>
<feature type="glycosylation site" description="N-linked (GlcNAc...) (keratan sulfate) asparagine" evidence="1">
    <location>
        <position position="167"/>
    </location>
</feature>
<feature type="glycosylation site" description="N-linked (GlcNAc...) asparagine" evidence="3">
    <location>
        <position position="222"/>
    </location>
</feature>
<feature type="glycosylation site" description="N-linked (GlcNAc...) (keratan sulfate) asparagine" evidence="1">
    <location>
        <position position="260"/>
    </location>
</feature>
<feature type="glycosylation site" description="N-linked (GlcNAc...) asparagine" evidence="3">
    <location>
        <position position="298"/>
    </location>
</feature>
<feature type="disulfide bond" evidence="2">
    <location>
        <begin position="42"/>
        <end position="48"/>
    </location>
</feature>
<feature type="disulfide bond" evidence="2">
    <location>
        <begin position="46"/>
        <end position="58"/>
    </location>
</feature>
<feature type="disulfide bond" evidence="2">
    <location>
        <begin position="303"/>
        <end position="343"/>
    </location>
</feature>
<feature type="sequence conflict" description="In Ref. 2; AAC69272." evidence="5" ref="2">
    <original>K</original>
    <variation>R</variation>
    <location>
        <position position="189"/>
    </location>
</feature>
<feature type="sequence conflict" description="In Ref. 3; AAI20376." evidence="5" ref="3">
    <original>V</original>
    <variation>L</variation>
    <location>
        <position position="218"/>
    </location>
</feature>
<feature type="sequence conflict" description="In Ref. 3; AAI20376." evidence="5" ref="3">
    <original>H</original>
    <variation>Y</variation>
    <location>
        <position position="288"/>
    </location>
</feature>
<gene>
    <name type="primary">KERA</name>
</gene>